<gene>
    <name evidence="1" type="primary">pgk</name>
    <name type="ordered locus">Neut_1579</name>
</gene>
<name>PGK_NITEC</name>
<reference key="1">
    <citation type="journal article" date="2007" name="Environ. Microbiol.">
        <title>Whole-genome analysis of the ammonia-oxidizing bacterium, Nitrosomonas eutropha C91: implications for niche adaptation.</title>
        <authorList>
            <person name="Stein L.Y."/>
            <person name="Arp D.J."/>
            <person name="Berube P.M."/>
            <person name="Chain P.S."/>
            <person name="Hauser L."/>
            <person name="Jetten M.S."/>
            <person name="Klotz M.G."/>
            <person name="Larimer F.W."/>
            <person name="Norton J.M."/>
            <person name="Op den Camp H.J.M."/>
            <person name="Shin M."/>
            <person name="Wei X."/>
        </authorList>
    </citation>
    <scope>NUCLEOTIDE SEQUENCE [LARGE SCALE GENOMIC DNA]</scope>
    <source>
        <strain>DSM 101675 / C91 / Nm57</strain>
    </source>
</reference>
<dbReference type="EC" id="2.7.2.3" evidence="1"/>
<dbReference type="EMBL" id="CP000450">
    <property type="protein sequence ID" value="ABI59823.1"/>
    <property type="molecule type" value="Genomic_DNA"/>
</dbReference>
<dbReference type="RefSeq" id="WP_011634629.1">
    <property type="nucleotide sequence ID" value="NC_008344.1"/>
</dbReference>
<dbReference type="SMR" id="Q0AFQ9"/>
<dbReference type="STRING" id="335283.Neut_1579"/>
<dbReference type="KEGG" id="net:Neut_1579"/>
<dbReference type="eggNOG" id="COG0126">
    <property type="taxonomic scope" value="Bacteria"/>
</dbReference>
<dbReference type="HOGENOM" id="CLU_025427_0_2_4"/>
<dbReference type="OrthoDB" id="9808460at2"/>
<dbReference type="UniPathway" id="UPA00109">
    <property type="reaction ID" value="UER00185"/>
</dbReference>
<dbReference type="Proteomes" id="UP000001966">
    <property type="component" value="Chromosome"/>
</dbReference>
<dbReference type="GO" id="GO:0005829">
    <property type="term" value="C:cytosol"/>
    <property type="evidence" value="ECO:0007669"/>
    <property type="project" value="TreeGrafter"/>
</dbReference>
<dbReference type="GO" id="GO:0043531">
    <property type="term" value="F:ADP binding"/>
    <property type="evidence" value="ECO:0007669"/>
    <property type="project" value="TreeGrafter"/>
</dbReference>
<dbReference type="GO" id="GO:0005524">
    <property type="term" value="F:ATP binding"/>
    <property type="evidence" value="ECO:0007669"/>
    <property type="project" value="UniProtKB-KW"/>
</dbReference>
<dbReference type="GO" id="GO:0004618">
    <property type="term" value="F:phosphoglycerate kinase activity"/>
    <property type="evidence" value="ECO:0007669"/>
    <property type="project" value="UniProtKB-UniRule"/>
</dbReference>
<dbReference type="GO" id="GO:0006094">
    <property type="term" value="P:gluconeogenesis"/>
    <property type="evidence" value="ECO:0007669"/>
    <property type="project" value="TreeGrafter"/>
</dbReference>
<dbReference type="GO" id="GO:0006096">
    <property type="term" value="P:glycolytic process"/>
    <property type="evidence" value="ECO:0007669"/>
    <property type="project" value="UniProtKB-UniRule"/>
</dbReference>
<dbReference type="FunFam" id="3.40.50.1260:FF:000001">
    <property type="entry name" value="Phosphoglycerate kinase"/>
    <property type="match status" value="1"/>
</dbReference>
<dbReference type="FunFam" id="3.40.50.1260:FF:000002">
    <property type="entry name" value="Phosphoglycerate kinase"/>
    <property type="match status" value="1"/>
</dbReference>
<dbReference type="Gene3D" id="3.40.50.1260">
    <property type="entry name" value="Phosphoglycerate kinase, N-terminal domain"/>
    <property type="match status" value="2"/>
</dbReference>
<dbReference type="HAMAP" id="MF_00145">
    <property type="entry name" value="Phosphoglyc_kinase"/>
    <property type="match status" value="1"/>
</dbReference>
<dbReference type="InterPro" id="IPR001576">
    <property type="entry name" value="Phosphoglycerate_kinase"/>
</dbReference>
<dbReference type="InterPro" id="IPR015911">
    <property type="entry name" value="Phosphoglycerate_kinase_CS"/>
</dbReference>
<dbReference type="InterPro" id="IPR015824">
    <property type="entry name" value="Phosphoglycerate_kinase_N"/>
</dbReference>
<dbReference type="InterPro" id="IPR036043">
    <property type="entry name" value="Phosphoglycerate_kinase_sf"/>
</dbReference>
<dbReference type="PANTHER" id="PTHR11406">
    <property type="entry name" value="PHOSPHOGLYCERATE KINASE"/>
    <property type="match status" value="1"/>
</dbReference>
<dbReference type="PANTHER" id="PTHR11406:SF23">
    <property type="entry name" value="PHOSPHOGLYCERATE KINASE 1, CHLOROPLASTIC-RELATED"/>
    <property type="match status" value="1"/>
</dbReference>
<dbReference type="Pfam" id="PF00162">
    <property type="entry name" value="PGK"/>
    <property type="match status" value="1"/>
</dbReference>
<dbReference type="PIRSF" id="PIRSF000724">
    <property type="entry name" value="Pgk"/>
    <property type="match status" value="1"/>
</dbReference>
<dbReference type="PRINTS" id="PR00477">
    <property type="entry name" value="PHGLYCKINASE"/>
</dbReference>
<dbReference type="SUPFAM" id="SSF53748">
    <property type="entry name" value="Phosphoglycerate kinase"/>
    <property type="match status" value="1"/>
</dbReference>
<dbReference type="PROSITE" id="PS00111">
    <property type="entry name" value="PGLYCERATE_KINASE"/>
    <property type="match status" value="1"/>
</dbReference>
<evidence type="ECO:0000255" key="1">
    <source>
        <dbReference type="HAMAP-Rule" id="MF_00145"/>
    </source>
</evidence>
<comment type="catalytic activity">
    <reaction evidence="1">
        <text>(2R)-3-phosphoglycerate + ATP = (2R)-3-phospho-glyceroyl phosphate + ADP</text>
        <dbReference type="Rhea" id="RHEA:14801"/>
        <dbReference type="ChEBI" id="CHEBI:30616"/>
        <dbReference type="ChEBI" id="CHEBI:57604"/>
        <dbReference type="ChEBI" id="CHEBI:58272"/>
        <dbReference type="ChEBI" id="CHEBI:456216"/>
        <dbReference type="EC" id="2.7.2.3"/>
    </reaction>
</comment>
<comment type="pathway">
    <text evidence="1">Carbohydrate degradation; glycolysis; pyruvate from D-glyceraldehyde 3-phosphate: step 2/5.</text>
</comment>
<comment type="subunit">
    <text evidence="1">Monomer.</text>
</comment>
<comment type="subcellular location">
    <subcellularLocation>
        <location evidence="1">Cytoplasm</location>
    </subcellularLocation>
</comment>
<comment type="similarity">
    <text evidence="1">Belongs to the phosphoglycerate kinase family.</text>
</comment>
<feature type="chain" id="PRO_1000058020" description="Phosphoglycerate kinase">
    <location>
        <begin position="1"/>
        <end position="392"/>
    </location>
</feature>
<feature type="binding site" evidence="1">
    <location>
        <begin position="21"/>
        <end position="23"/>
    </location>
    <ligand>
        <name>substrate</name>
    </ligand>
</feature>
<feature type="binding site" evidence="1">
    <location>
        <position position="36"/>
    </location>
    <ligand>
        <name>substrate</name>
    </ligand>
</feature>
<feature type="binding site" evidence="1">
    <location>
        <begin position="59"/>
        <end position="62"/>
    </location>
    <ligand>
        <name>substrate</name>
    </ligand>
</feature>
<feature type="binding site" evidence="1">
    <location>
        <position position="114"/>
    </location>
    <ligand>
        <name>substrate</name>
    </ligand>
</feature>
<feature type="binding site" evidence="1">
    <location>
        <position position="147"/>
    </location>
    <ligand>
        <name>substrate</name>
    </ligand>
</feature>
<feature type="binding site" evidence="1">
    <location>
        <position position="198"/>
    </location>
    <ligand>
        <name>ATP</name>
        <dbReference type="ChEBI" id="CHEBI:30616"/>
    </ligand>
</feature>
<feature type="binding site" evidence="1">
    <location>
        <position position="320"/>
    </location>
    <ligand>
        <name>ATP</name>
        <dbReference type="ChEBI" id="CHEBI:30616"/>
    </ligand>
</feature>
<feature type="binding site" evidence="1">
    <location>
        <begin position="346"/>
        <end position="349"/>
    </location>
    <ligand>
        <name>ATP</name>
        <dbReference type="ChEBI" id="CHEBI:30616"/>
    </ligand>
</feature>
<accession>Q0AFQ9</accession>
<sequence length="392" mass="42031">MSVIKLVDLDLKNKRVFIRSDLNVPVKEGKVTSDARITASMATINHCLKQGARVMVTSHLGRPEEGVWAMENSLQPVANDISRRLGTTVRLIKDWVDGGFEVAPGELVILENCRINKGEKKNLEETAKKYANLCDVFVMDAFGTAHRAEASTHGVAKYAPVACAGILLTEELDALTKALHQPARPLVAIVGGSKVSTKLTVLESLTEKVDQLVVGGGIANTFLKAAGNNVGKSLCEDELVPIAKSLMDKMNQRNATIPIAIDVVVGKKFAADEPAVLKEANAVSDDDMIFDIGPKSTQELVNIIMKAGTVVWNGPVGVFEFDQFGEGTHAIAKAIAETDAFTLAGGGDTIAAIQKYDIYDKVSYISTAGGAFLEFLEGKKLPAVEILELRAQ</sequence>
<protein>
    <recommendedName>
        <fullName evidence="1">Phosphoglycerate kinase</fullName>
        <ecNumber evidence="1">2.7.2.3</ecNumber>
    </recommendedName>
</protein>
<keyword id="KW-0067">ATP-binding</keyword>
<keyword id="KW-0963">Cytoplasm</keyword>
<keyword id="KW-0324">Glycolysis</keyword>
<keyword id="KW-0418">Kinase</keyword>
<keyword id="KW-0547">Nucleotide-binding</keyword>
<keyword id="KW-0808">Transferase</keyword>
<organism>
    <name type="scientific">Nitrosomonas eutropha (strain DSM 101675 / C91 / Nm57)</name>
    <dbReference type="NCBI Taxonomy" id="335283"/>
    <lineage>
        <taxon>Bacteria</taxon>
        <taxon>Pseudomonadati</taxon>
        <taxon>Pseudomonadota</taxon>
        <taxon>Betaproteobacteria</taxon>
        <taxon>Nitrosomonadales</taxon>
        <taxon>Nitrosomonadaceae</taxon>
        <taxon>Nitrosomonas</taxon>
    </lineage>
</organism>
<proteinExistence type="inferred from homology"/>